<feature type="chain" id="PRO_0000065198" description="Uncharacterized protein C28H8.7">
    <location>
        <begin position="1"/>
        <end position="283"/>
    </location>
</feature>
<gene>
    <name type="ORF">C28H8.7</name>
</gene>
<reference key="1">
    <citation type="journal article" date="1998" name="Science">
        <title>Genome sequence of the nematode C. elegans: a platform for investigating biology.</title>
        <authorList>
            <consortium name="The C. elegans sequencing consortium"/>
        </authorList>
    </citation>
    <scope>NUCLEOTIDE SEQUENCE [LARGE SCALE GENOMIC DNA]</scope>
    <source>
        <strain>Bristol N2</strain>
    </source>
</reference>
<accession>Q09245</accession>
<protein>
    <recommendedName>
        <fullName>Uncharacterized protein C28H8.7</fullName>
    </recommendedName>
</protein>
<organism>
    <name type="scientific">Caenorhabditis elegans</name>
    <dbReference type="NCBI Taxonomy" id="6239"/>
    <lineage>
        <taxon>Eukaryota</taxon>
        <taxon>Metazoa</taxon>
        <taxon>Ecdysozoa</taxon>
        <taxon>Nematoda</taxon>
        <taxon>Chromadorea</taxon>
        <taxon>Rhabditida</taxon>
        <taxon>Rhabditina</taxon>
        <taxon>Rhabditomorpha</taxon>
        <taxon>Rhabditoidea</taxon>
        <taxon>Rhabditidae</taxon>
        <taxon>Peloderinae</taxon>
        <taxon>Caenorhabditis</taxon>
    </lineage>
</organism>
<sequence>MSPHPRNIKLLFALILLLLVYIARQKRFEQQYFDRYLEHPRGGDSTKSKFQTEVDKWVKCMEKDLYVDRESWYYVRFATERCKNASIFLNVPIMKLETNVEYQTGIRSYDMFIATKKEPFVFVTIGNYTDSRTRKNMTDELPTDLKTYGTHLNSSNIYWDYGSLANYLNQSESAGIGHFSTYLKTQVNHKVIDLISIKEEVNNYKIFHEISRMGKLDENGQIVCQIEIRLAPPTSQTIKHLMAGLSLIFNDSRYVLLSFHNLELFLVNYEHQECRGKYLAPYI</sequence>
<dbReference type="EMBL" id="FO080703">
    <property type="protein sequence ID" value="CCD65968.1"/>
    <property type="molecule type" value="Genomic_DNA"/>
</dbReference>
<dbReference type="PIR" id="C88469">
    <property type="entry name" value="C88469"/>
</dbReference>
<dbReference type="RefSeq" id="NP_498278.1">
    <property type="nucleotide sequence ID" value="NM_065877.3"/>
</dbReference>
<dbReference type="BioGRID" id="47834">
    <property type="interactions" value="6"/>
</dbReference>
<dbReference type="FunCoup" id="Q09245">
    <property type="interactions" value="226"/>
</dbReference>
<dbReference type="PaxDb" id="6239-C28H8.7"/>
<dbReference type="EnsemblMetazoa" id="C28H8.7.1">
    <property type="protein sequence ID" value="C28H8.7.1"/>
    <property type="gene ID" value="WBGene00016198"/>
</dbReference>
<dbReference type="GeneID" id="182997"/>
<dbReference type="KEGG" id="cel:CELE_C28H8.7"/>
<dbReference type="UCSC" id="C28H8.7">
    <property type="organism name" value="c. elegans"/>
</dbReference>
<dbReference type="AGR" id="WB:WBGene00016198"/>
<dbReference type="CTD" id="182997"/>
<dbReference type="WormBase" id="C28H8.7">
    <property type="protein sequence ID" value="CE01829"/>
    <property type="gene ID" value="WBGene00016198"/>
</dbReference>
<dbReference type="eggNOG" id="ENOG502TF2U">
    <property type="taxonomic scope" value="Eukaryota"/>
</dbReference>
<dbReference type="GeneTree" id="ENSGT00530000064291"/>
<dbReference type="HOGENOM" id="CLU_984273_0_0_1"/>
<dbReference type="InParanoid" id="Q09245"/>
<dbReference type="OMA" id="FHEISRM"/>
<dbReference type="OrthoDB" id="10486936at2759"/>
<dbReference type="PhylomeDB" id="Q09245"/>
<dbReference type="PRO" id="PR:Q09245"/>
<dbReference type="Proteomes" id="UP000001940">
    <property type="component" value="Chromosome III"/>
</dbReference>
<dbReference type="Bgee" id="WBGene00016198">
    <property type="expression patterns" value="Expressed in adult organism"/>
</dbReference>
<dbReference type="PANTHER" id="PTHR22989:SF4">
    <property type="entry name" value="METHYLTRANSFERASE FKBM DOMAIN-CONTAINING PROTEIN"/>
    <property type="match status" value="1"/>
</dbReference>
<dbReference type="PANTHER" id="PTHR22989">
    <property type="entry name" value="UNCHARACTERIZED DUF13 C.ELEGANS"/>
    <property type="match status" value="1"/>
</dbReference>
<keyword id="KW-1185">Reference proteome</keyword>
<proteinExistence type="predicted"/>
<name>YP97_CAEEL</name>